<dbReference type="EMBL" id="DQ073079">
    <property type="protein sequence ID" value="AAZ22829.1"/>
    <property type="molecule type" value="mRNA"/>
</dbReference>
<dbReference type="SMR" id="Q3YMR2"/>
<dbReference type="GO" id="GO:0008289">
    <property type="term" value="F:lipid binding"/>
    <property type="evidence" value="ECO:0007669"/>
    <property type="project" value="UniProtKB-KW"/>
</dbReference>
<dbReference type="GO" id="GO:0006869">
    <property type="term" value="P:lipid transport"/>
    <property type="evidence" value="ECO:0007669"/>
    <property type="project" value="InterPro"/>
</dbReference>
<dbReference type="CDD" id="cd01960">
    <property type="entry name" value="nsLTP1"/>
    <property type="match status" value="1"/>
</dbReference>
<dbReference type="Gene3D" id="1.10.110.10">
    <property type="entry name" value="Plant lipid-transfer and hydrophobic proteins"/>
    <property type="match status" value="1"/>
</dbReference>
<dbReference type="InterPro" id="IPR036312">
    <property type="entry name" value="Bifun_inhib/LTP/seed_sf"/>
</dbReference>
<dbReference type="InterPro" id="IPR016140">
    <property type="entry name" value="Bifunc_inhib/LTP/seed_store"/>
</dbReference>
<dbReference type="InterPro" id="IPR000528">
    <property type="entry name" value="Plant_nsLTP"/>
</dbReference>
<dbReference type="PANTHER" id="PTHR33076">
    <property type="entry name" value="NON-SPECIFIC LIPID-TRANSFER PROTEIN 2-RELATED"/>
    <property type="match status" value="1"/>
</dbReference>
<dbReference type="Pfam" id="PF00234">
    <property type="entry name" value="Tryp_alpha_amyl"/>
    <property type="match status" value="1"/>
</dbReference>
<dbReference type="PRINTS" id="PR00382">
    <property type="entry name" value="LIPIDTRNSFER"/>
</dbReference>
<dbReference type="SMART" id="SM00499">
    <property type="entry name" value="AAI"/>
    <property type="match status" value="1"/>
</dbReference>
<dbReference type="SUPFAM" id="SSF47699">
    <property type="entry name" value="Bifunctional inhibitor/lipid-transfer protein/seed storage 2S albumin"/>
    <property type="match status" value="1"/>
</dbReference>
<dbReference type="PROSITE" id="PS00597">
    <property type="entry name" value="PLANT_LTP"/>
    <property type="match status" value="1"/>
</dbReference>
<protein>
    <recommendedName>
        <fullName>Non-specific lipid-transfer protein 2</fullName>
        <shortName>LTP 2</shortName>
    </recommendedName>
</protein>
<organism>
    <name type="scientific">Solanum chilense</name>
    <name type="common">Tomato</name>
    <name type="synonym">Lycopersicon chilense</name>
    <dbReference type="NCBI Taxonomy" id="4083"/>
    <lineage>
        <taxon>Eukaryota</taxon>
        <taxon>Viridiplantae</taxon>
        <taxon>Streptophyta</taxon>
        <taxon>Embryophyta</taxon>
        <taxon>Tracheophyta</taxon>
        <taxon>Spermatophyta</taxon>
        <taxon>Magnoliopsida</taxon>
        <taxon>eudicotyledons</taxon>
        <taxon>Gunneridae</taxon>
        <taxon>Pentapetalae</taxon>
        <taxon>asterids</taxon>
        <taxon>lamiids</taxon>
        <taxon>Solanales</taxon>
        <taxon>Solanaceae</taxon>
        <taxon>Solanoideae</taxon>
        <taxon>Solaneae</taxon>
        <taxon>Solanum</taxon>
        <taxon>Solanum subgen. Lycopersicon</taxon>
    </lineage>
</organism>
<accession>Q3YMR2</accession>
<keyword id="KW-1015">Disulfide bond</keyword>
<keyword id="KW-0446">Lipid-binding</keyword>
<keyword id="KW-0732">Signal</keyword>
<keyword id="KW-0813">Transport</keyword>
<sequence>MEMVNKIACFVLLCMVVVAPHAEALTCGQVTSTLAPCLPYLMNRGPLGGCCGGVKGLLGQAQTTVDRQAACACLKSAASSFTDLDLGKAASLPSTCNVNIPYKISPSTDCSKVQ</sequence>
<comment type="function">
    <text evidence="1">Plant non-specific lipid-transfer proteins transfer phospholipids as well as galactolipids across membranes. May play a role in wax or cutin deposition in the cell walls of expanding epidermal cells and certain secretory tissues (By similarity).</text>
</comment>
<comment type="similarity">
    <text evidence="3">Belongs to the plant LTP family.</text>
</comment>
<reference key="1">
    <citation type="submission" date="2005-05" db="EMBL/GenBank/DDBJ databases">
        <title>Identification of differentially expressed genes during salt stress in leaves of Lycopersicon chilense.</title>
        <authorList>
            <person name="Tapia G.M."/>
            <person name="Yanez M.L."/>
            <person name="Ruiz-Lara S.A."/>
        </authorList>
    </citation>
    <scope>NUCLEOTIDE SEQUENCE [MRNA]</scope>
</reference>
<proteinExistence type="inferred from homology"/>
<evidence type="ECO:0000250" key="1"/>
<evidence type="ECO:0000255" key="2"/>
<evidence type="ECO:0000305" key="3"/>
<name>NLTP2_SOLCI</name>
<feature type="signal peptide" evidence="2">
    <location>
        <begin position="1"/>
        <end position="23"/>
    </location>
</feature>
<feature type="chain" id="PRO_0000252691" description="Non-specific lipid-transfer protein 2">
    <location>
        <begin position="24"/>
        <end position="114"/>
    </location>
</feature>
<feature type="disulfide bond" evidence="1">
    <location>
        <begin position="27"/>
        <end position="73"/>
    </location>
</feature>
<feature type="disulfide bond" evidence="1">
    <location>
        <begin position="37"/>
        <end position="50"/>
    </location>
</feature>
<feature type="disulfide bond" evidence="1">
    <location>
        <begin position="51"/>
        <end position="96"/>
    </location>
</feature>
<feature type="disulfide bond" evidence="1">
    <location>
        <begin position="71"/>
        <end position="110"/>
    </location>
</feature>